<accession>Q9RCT3</accession>
<accession>Q9RMG1</accession>
<feature type="chain" id="PRO_0000083994" description="Putative hemolysin E-like protein">
    <location>
        <begin position="1"/>
        <end position="113"/>
    </location>
</feature>
<name>HLYEL_SHIFL</name>
<keyword id="KW-1185">Reference proteome</keyword>
<organism>
    <name type="scientific">Shigella flexneri</name>
    <dbReference type="NCBI Taxonomy" id="623"/>
    <lineage>
        <taxon>Bacteria</taxon>
        <taxon>Pseudomonadati</taxon>
        <taxon>Pseudomonadota</taxon>
        <taxon>Gammaproteobacteria</taxon>
        <taxon>Enterobacterales</taxon>
        <taxon>Enterobacteriaceae</taxon>
        <taxon>Shigella</taxon>
    </lineage>
</organism>
<protein>
    <recommendedName>
        <fullName>Putative hemolysin E-like protein</fullName>
    </recommendedName>
</protein>
<dbReference type="EMBL" id="AF200955">
    <property type="protein sequence ID" value="AAF13995.1"/>
    <property type="molecule type" value="Genomic_DNA"/>
</dbReference>
<dbReference type="EMBL" id="AJ238955">
    <property type="protein sequence ID" value="CAB65415.1"/>
    <property type="status" value="ALT_INIT"/>
    <property type="molecule type" value="Genomic_DNA"/>
</dbReference>
<dbReference type="EMBL" id="AE005674">
    <property type="status" value="NOT_ANNOTATED_CDS"/>
    <property type="molecule type" value="Genomic_DNA"/>
</dbReference>
<dbReference type="EMBL" id="AE014073">
    <property type="status" value="NOT_ANNOTATED_CDS"/>
    <property type="molecule type" value="Genomic_DNA"/>
</dbReference>
<dbReference type="SMR" id="Q9RCT3"/>
<dbReference type="Proteomes" id="UP000001006">
    <property type="component" value="Chromosome"/>
</dbReference>
<dbReference type="Proteomes" id="UP000002673">
    <property type="component" value="Chromosome"/>
</dbReference>
<dbReference type="GO" id="GO:0044179">
    <property type="term" value="P:hemolysis in another organism"/>
    <property type="evidence" value="ECO:0007669"/>
    <property type="project" value="InterPro"/>
</dbReference>
<dbReference type="Gene3D" id="1.20.1170.10">
    <property type="match status" value="1"/>
</dbReference>
<dbReference type="InterPro" id="IPR027018">
    <property type="entry name" value="Hemolysin_E"/>
</dbReference>
<dbReference type="Pfam" id="PF06109">
    <property type="entry name" value="HlyE"/>
    <property type="match status" value="1"/>
</dbReference>
<dbReference type="SUPFAM" id="SSF58100">
    <property type="entry name" value="Bacterial hemolysins"/>
    <property type="match status" value="1"/>
</dbReference>
<proteinExistence type="uncertain"/>
<comment type="similarity">
    <text evidence="1">Belongs to the hemolysin E family.</text>
</comment>
<comment type="caution">
    <text evidence="1">Could be the product of a pseudogene. Although it is strongly related to the hemolysin E toxin from E.coli K12 strain, it lacks all the C-terminal part of the protein, due to a deletion that creates a frameshift, and it is therefore not functional.</text>
</comment>
<comment type="sequence caution" evidence="1">
    <conflict type="erroneous initiation">
        <sequence resource="EMBL-CDS" id="CAB65415"/>
    </conflict>
</comment>
<evidence type="ECO:0000305" key="1"/>
<sequence length="113" mass="12880">MTEIVADKTVEVVKNAIETADGALDLYNKYLDQVIPWQTFDETIKELSRFKQEYSQAASVLVGDIKTLLMDSQDKYFEATQTVYEWCGVATQLLAAYILLFDEYNEKKASAPH</sequence>
<reference key="1">
    <citation type="journal article" date="2000" name="Cell">
        <title>E. coli hemolysin E (HlyE, ClyA, SheA): X-ray crystal structure of the toxin and observation of membrane pores by electron microscopy.</title>
        <authorList>
            <person name="Wallace A.J."/>
            <person name="Stillman T.J."/>
            <person name="Atkins A."/>
            <person name="Jamieson S.J."/>
            <person name="Bullough P.A."/>
            <person name="Green J."/>
            <person name="Artymiuk P.J."/>
        </authorList>
    </citation>
    <scope>NUCLEOTIDE SEQUENCE [GENOMIC DNA]</scope>
    <source>
        <strain>ATCC 12022 / CDC 3591-52 / Serotype 2b</strain>
    </source>
</reference>
<reference key="2">
    <citation type="journal article" date="2000" name="Res. Microbiol.">
        <title>Characterization of the genes encoding the SheA haemolysin in Escherichia coli O157:H7 and Shigella flexneri 2a.</title>
        <authorList>
            <person name="del Castillo F.J."/>
            <person name="Moreno F."/>
            <person name="del Castillo I."/>
        </authorList>
    </citation>
    <scope>NUCLEOTIDE SEQUENCE [GENOMIC DNA]</scope>
    <source>
        <strain>CECT 585 / Serotype 2a</strain>
    </source>
</reference>
<reference key="3">
    <citation type="journal article" date="2002" name="Nucleic Acids Res.">
        <title>Genome sequence of Shigella flexneri 2a: insights into pathogenicity through comparison with genomes of Escherichia coli K12 and O157.</title>
        <authorList>
            <person name="Jin Q."/>
            <person name="Yuan Z."/>
            <person name="Xu J."/>
            <person name="Wang Y."/>
            <person name="Shen Y."/>
            <person name="Lu W."/>
            <person name="Wang J."/>
            <person name="Liu H."/>
            <person name="Yang J."/>
            <person name="Yang F."/>
            <person name="Zhang X."/>
            <person name="Zhang J."/>
            <person name="Yang G."/>
            <person name="Wu H."/>
            <person name="Qu D."/>
            <person name="Dong J."/>
            <person name="Sun L."/>
            <person name="Xue Y."/>
            <person name="Zhao A."/>
            <person name="Gao Y."/>
            <person name="Zhu J."/>
            <person name="Kan B."/>
            <person name="Ding K."/>
            <person name="Chen S."/>
            <person name="Cheng H."/>
            <person name="Yao Z."/>
            <person name="He B."/>
            <person name="Chen R."/>
            <person name="Ma D."/>
            <person name="Qiang B."/>
            <person name="Wen Y."/>
            <person name="Hou Y."/>
            <person name="Yu J."/>
        </authorList>
    </citation>
    <scope>NUCLEOTIDE SEQUENCE [LARGE SCALE GENOMIC DNA]</scope>
    <source>
        <strain>301 / Serotype 2a</strain>
    </source>
</reference>
<reference key="4">
    <citation type="journal article" date="2003" name="Infect. Immun.">
        <title>Complete genome sequence and comparative genomics of Shigella flexneri serotype 2a strain 2457T.</title>
        <authorList>
            <person name="Wei J."/>
            <person name="Goldberg M.B."/>
            <person name="Burland V."/>
            <person name="Venkatesan M.M."/>
            <person name="Deng W."/>
            <person name="Fournier G."/>
            <person name="Mayhew G.F."/>
            <person name="Plunkett G. III"/>
            <person name="Rose D.J."/>
            <person name="Darling A."/>
            <person name="Mau B."/>
            <person name="Perna N.T."/>
            <person name="Payne S.M."/>
            <person name="Runyen-Janecky L.J."/>
            <person name="Zhou S."/>
            <person name="Schwartz D.C."/>
            <person name="Blattner F.R."/>
        </authorList>
    </citation>
    <scope>NUCLEOTIDE SEQUENCE [LARGE SCALE GENOMIC DNA]</scope>
    <source>
        <strain>ATCC 700930 / 2457T / Serotype 2a</strain>
    </source>
</reference>
<gene>
    <name type="ordered locus">SF1171</name>
    <name type="ordered locus">S1259</name>
</gene>